<gene>
    <name evidence="1" type="primary">pth</name>
    <name type="ordered locus">MCAP_0105</name>
</gene>
<name>PTH_MYCCT</name>
<accession>Q2ST16</accession>
<protein>
    <recommendedName>
        <fullName evidence="1">Peptidyl-tRNA hydrolase</fullName>
        <shortName evidence="1">Pth</shortName>
        <ecNumber evidence="1">3.1.1.29</ecNumber>
    </recommendedName>
</protein>
<sequence>MKVIIGLGNIGKEYEKTRHNAGFIAIDLLLEKYKYNSIKEEFNSLVYTSIINNQKVLFVKPLTFMNNSGLTVKQIINFYKIDLNDLIVIHDDKDLNISRIQFKKDGSSAGHNGIKSIINNLNTQDFYRLRIGINKPANQWKIVDWVLSKFSDDELNLLKESFNNKSEFINDFTNNKTFTYLMNKYN</sequence>
<feature type="chain" id="PRO_0000264060" description="Peptidyl-tRNA hydrolase">
    <location>
        <begin position="1"/>
        <end position="186"/>
    </location>
</feature>
<feature type="active site" description="Proton acceptor" evidence="1">
    <location>
        <position position="19"/>
    </location>
</feature>
<feature type="binding site" evidence="1">
    <location>
        <position position="14"/>
    </location>
    <ligand>
        <name>tRNA</name>
        <dbReference type="ChEBI" id="CHEBI:17843"/>
    </ligand>
</feature>
<feature type="binding site" evidence="1">
    <location>
        <position position="64"/>
    </location>
    <ligand>
        <name>tRNA</name>
        <dbReference type="ChEBI" id="CHEBI:17843"/>
    </ligand>
</feature>
<feature type="binding site" evidence="1">
    <location>
        <position position="66"/>
    </location>
    <ligand>
        <name>tRNA</name>
        <dbReference type="ChEBI" id="CHEBI:17843"/>
    </ligand>
</feature>
<feature type="binding site" evidence="1">
    <location>
        <position position="112"/>
    </location>
    <ligand>
        <name>tRNA</name>
        <dbReference type="ChEBI" id="CHEBI:17843"/>
    </ligand>
</feature>
<feature type="site" description="Discriminates between blocked and unblocked aminoacyl-tRNA" evidence="1">
    <location>
        <position position="9"/>
    </location>
</feature>
<feature type="site" description="Stabilizes the basic form of H active site to accept a proton" evidence="1">
    <location>
        <position position="91"/>
    </location>
</feature>
<evidence type="ECO:0000255" key="1">
    <source>
        <dbReference type="HAMAP-Rule" id="MF_00083"/>
    </source>
</evidence>
<dbReference type="EC" id="3.1.1.29" evidence="1"/>
<dbReference type="EMBL" id="CP000123">
    <property type="protein sequence ID" value="ABC01846.1"/>
    <property type="molecule type" value="Genomic_DNA"/>
</dbReference>
<dbReference type="RefSeq" id="WP_011387002.1">
    <property type="nucleotide sequence ID" value="NC_007633.1"/>
</dbReference>
<dbReference type="SMR" id="Q2ST16"/>
<dbReference type="GeneID" id="23778942"/>
<dbReference type="KEGG" id="mcp:MCAP_0105"/>
<dbReference type="HOGENOM" id="CLU_062456_4_1_14"/>
<dbReference type="PhylomeDB" id="Q2ST16"/>
<dbReference type="Proteomes" id="UP000001928">
    <property type="component" value="Chromosome"/>
</dbReference>
<dbReference type="GO" id="GO:0005737">
    <property type="term" value="C:cytoplasm"/>
    <property type="evidence" value="ECO:0007669"/>
    <property type="project" value="UniProtKB-SubCell"/>
</dbReference>
<dbReference type="GO" id="GO:0004045">
    <property type="term" value="F:peptidyl-tRNA hydrolase activity"/>
    <property type="evidence" value="ECO:0007669"/>
    <property type="project" value="UniProtKB-UniRule"/>
</dbReference>
<dbReference type="GO" id="GO:0000049">
    <property type="term" value="F:tRNA binding"/>
    <property type="evidence" value="ECO:0007669"/>
    <property type="project" value="UniProtKB-UniRule"/>
</dbReference>
<dbReference type="GO" id="GO:0006515">
    <property type="term" value="P:protein quality control for misfolded or incompletely synthesized proteins"/>
    <property type="evidence" value="ECO:0007669"/>
    <property type="project" value="UniProtKB-UniRule"/>
</dbReference>
<dbReference type="GO" id="GO:0072344">
    <property type="term" value="P:rescue of stalled ribosome"/>
    <property type="evidence" value="ECO:0007669"/>
    <property type="project" value="UniProtKB-UniRule"/>
</dbReference>
<dbReference type="CDD" id="cd00462">
    <property type="entry name" value="PTH"/>
    <property type="match status" value="1"/>
</dbReference>
<dbReference type="FunFam" id="3.40.50.1470:FF:000001">
    <property type="entry name" value="Peptidyl-tRNA hydrolase"/>
    <property type="match status" value="1"/>
</dbReference>
<dbReference type="Gene3D" id="3.40.50.1470">
    <property type="entry name" value="Peptidyl-tRNA hydrolase"/>
    <property type="match status" value="1"/>
</dbReference>
<dbReference type="HAMAP" id="MF_00083">
    <property type="entry name" value="Pept_tRNA_hydro_bact"/>
    <property type="match status" value="1"/>
</dbReference>
<dbReference type="InterPro" id="IPR001328">
    <property type="entry name" value="Pept_tRNA_hydro"/>
</dbReference>
<dbReference type="InterPro" id="IPR018171">
    <property type="entry name" value="Pept_tRNA_hydro_CS"/>
</dbReference>
<dbReference type="InterPro" id="IPR036416">
    <property type="entry name" value="Pept_tRNA_hydro_sf"/>
</dbReference>
<dbReference type="NCBIfam" id="TIGR00447">
    <property type="entry name" value="pth"/>
    <property type="match status" value="1"/>
</dbReference>
<dbReference type="PANTHER" id="PTHR17224">
    <property type="entry name" value="PEPTIDYL-TRNA HYDROLASE"/>
    <property type="match status" value="1"/>
</dbReference>
<dbReference type="PANTHER" id="PTHR17224:SF1">
    <property type="entry name" value="PEPTIDYL-TRNA HYDROLASE"/>
    <property type="match status" value="1"/>
</dbReference>
<dbReference type="Pfam" id="PF01195">
    <property type="entry name" value="Pept_tRNA_hydro"/>
    <property type="match status" value="1"/>
</dbReference>
<dbReference type="SUPFAM" id="SSF53178">
    <property type="entry name" value="Peptidyl-tRNA hydrolase-like"/>
    <property type="match status" value="1"/>
</dbReference>
<dbReference type="PROSITE" id="PS01195">
    <property type="entry name" value="PEPT_TRNA_HYDROL_1"/>
    <property type="match status" value="1"/>
</dbReference>
<dbReference type="PROSITE" id="PS01196">
    <property type="entry name" value="PEPT_TRNA_HYDROL_2"/>
    <property type="match status" value="1"/>
</dbReference>
<keyword id="KW-0963">Cytoplasm</keyword>
<keyword id="KW-0378">Hydrolase</keyword>
<keyword id="KW-0694">RNA-binding</keyword>
<keyword id="KW-0820">tRNA-binding</keyword>
<proteinExistence type="inferred from homology"/>
<comment type="function">
    <text evidence="1">Hydrolyzes ribosome-free peptidyl-tRNAs (with 1 or more amino acids incorporated), which drop off the ribosome during protein synthesis, or as a result of ribosome stalling.</text>
</comment>
<comment type="function">
    <text evidence="1">Catalyzes the release of premature peptidyl moieties from peptidyl-tRNA molecules trapped in stalled 50S ribosomal subunits, and thus maintains levels of free tRNAs and 50S ribosomes.</text>
</comment>
<comment type="catalytic activity">
    <reaction evidence="1">
        <text>an N-acyl-L-alpha-aminoacyl-tRNA + H2O = an N-acyl-L-amino acid + a tRNA + H(+)</text>
        <dbReference type="Rhea" id="RHEA:54448"/>
        <dbReference type="Rhea" id="RHEA-COMP:10123"/>
        <dbReference type="Rhea" id="RHEA-COMP:13883"/>
        <dbReference type="ChEBI" id="CHEBI:15377"/>
        <dbReference type="ChEBI" id="CHEBI:15378"/>
        <dbReference type="ChEBI" id="CHEBI:59874"/>
        <dbReference type="ChEBI" id="CHEBI:78442"/>
        <dbReference type="ChEBI" id="CHEBI:138191"/>
        <dbReference type="EC" id="3.1.1.29"/>
    </reaction>
</comment>
<comment type="subunit">
    <text evidence="1">Monomer.</text>
</comment>
<comment type="subcellular location">
    <subcellularLocation>
        <location evidence="1">Cytoplasm</location>
    </subcellularLocation>
</comment>
<comment type="similarity">
    <text evidence="1">Belongs to the PTH family.</text>
</comment>
<organism>
    <name type="scientific">Mycoplasma capricolum subsp. capricolum (strain California kid / ATCC 27343 / NCTC 10154)</name>
    <dbReference type="NCBI Taxonomy" id="340047"/>
    <lineage>
        <taxon>Bacteria</taxon>
        <taxon>Bacillati</taxon>
        <taxon>Mycoplasmatota</taxon>
        <taxon>Mollicutes</taxon>
        <taxon>Mycoplasmataceae</taxon>
        <taxon>Mycoplasma</taxon>
    </lineage>
</organism>
<reference key="1">
    <citation type="submission" date="2005-09" db="EMBL/GenBank/DDBJ databases">
        <authorList>
            <person name="Glass J.I."/>
            <person name="Lartigue C."/>
            <person name="Pfannkoch C."/>
            <person name="Baden-Tillson H."/>
            <person name="Smith H.O."/>
            <person name="Venter J.C."/>
            <person name="Roske K."/>
            <person name="Wise K.S."/>
            <person name="Calcutt M.J."/>
            <person name="Nelson W.C."/>
            <person name="Nierman W.C."/>
        </authorList>
    </citation>
    <scope>NUCLEOTIDE SEQUENCE [LARGE SCALE GENOMIC DNA]</scope>
    <source>
        <strain>California kid / ATCC 27343 / NCTC 10154</strain>
    </source>
</reference>